<organism>
    <name type="scientific">Nitrosococcus oceani (strain ATCC 19707 / BCRC 17464 / JCM 30415 / NCIMB 11848 / C-107)</name>
    <dbReference type="NCBI Taxonomy" id="323261"/>
    <lineage>
        <taxon>Bacteria</taxon>
        <taxon>Pseudomonadati</taxon>
        <taxon>Pseudomonadota</taxon>
        <taxon>Gammaproteobacteria</taxon>
        <taxon>Chromatiales</taxon>
        <taxon>Chromatiaceae</taxon>
        <taxon>Nitrosococcus</taxon>
    </lineage>
</organism>
<comment type="subcellular location">
    <subcellularLocation>
        <location evidence="1">Cell inner membrane</location>
        <topology evidence="1">Multi-pass membrane protein</topology>
    </subcellularLocation>
</comment>
<comment type="similarity">
    <text evidence="1">Belongs to the UPF0060 family.</text>
</comment>
<name>Y2955_NITOC</name>
<feature type="chain" id="PRO_0000282241" description="UPF0060 membrane protein Noc_2955">
    <location>
        <begin position="1"/>
        <end position="110"/>
    </location>
</feature>
<feature type="transmembrane region" description="Helical" evidence="1">
    <location>
        <begin position="7"/>
        <end position="27"/>
    </location>
</feature>
<feature type="transmembrane region" description="Helical" evidence="1">
    <location>
        <begin position="33"/>
        <end position="53"/>
    </location>
</feature>
<feature type="transmembrane region" description="Helical" evidence="1">
    <location>
        <begin position="63"/>
        <end position="83"/>
    </location>
</feature>
<feature type="transmembrane region" description="Helical" evidence="1">
    <location>
        <begin position="87"/>
        <end position="107"/>
    </location>
</feature>
<gene>
    <name type="ordered locus">Noc_2955</name>
</gene>
<accession>Q3J6Z7</accession>
<reference key="1">
    <citation type="journal article" date="2006" name="Appl. Environ. Microbiol.">
        <title>Complete genome sequence of the marine, chemolithoautotrophic, ammonia-oxidizing bacterium Nitrosococcus oceani ATCC 19707.</title>
        <authorList>
            <person name="Klotz M.G."/>
            <person name="Arp D.J."/>
            <person name="Chain P.S.G."/>
            <person name="El-Sheikh A.F."/>
            <person name="Hauser L.J."/>
            <person name="Hommes N.G."/>
            <person name="Larimer F.W."/>
            <person name="Malfatti S.A."/>
            <person name="Norton J.M."/>
            <person name="Poret-Peterson A.T."/>
            <person name="Vergez L.M."/>
            <person name="Ward B.B."/>
        </authorList>
    </citation>
    <scope>NUCLEOTIDE SEQUENCE [LARGE SCALE GENOMIC DNA]</scope>
    <source>
        <strain>ATCC 19707 / BCRC 17464 / JCM 30415 / NCIMB 11848 / C-107</strain>
    </source>
</reference>
<protein>
    <recommendedName>
        <fullName evidence="1">UPF0060 membrane protein Noc_2955</fullName>
    </recommendedName>
</protein>
<keyword id="KW-0997">Cell inner membrane</keyword>
<keyword id="KW-1003">Cell membrane</keyword>
<keyword id="KW-0472">Membrane</keyword>
<keyword id="KW-1185">Reference proteome</keyword>
<keyword id="KW-0812">Transmembrane</keyword>
<keyword id="KW-1133">Transmembrane helix</keyword>
<proteinExistence type="inferred from homology"/>
<dbReference type="EMBL" id="CP000127">
    <property type="protein sequence ID" value="ABA59399.1"/>
    <property type="molecule type" value="Genomic_DNA"/>
</dbReference>
<dbReference type="RefSeq" id="WP_002812988.1">
    <property type="nucleotide sequence ID" value="NC_007484.1"/>
</dbReference>
<dbReference type="SMR" id="Q3J6Z7"/>
<dbReference type="FunCoup" id="Q3J6Z7">
    <property type="interactions" value="54"/>
</dbReference>
<dbReference type="KEGG" id="noc:Noc_2955"/>
<dbReference type="eggNOG" id="COG1742">
    <property type="taxonomic scope" value="Bacteria"/>
</dbReference>
<dbReference type="HOGENOM" id="CLU_117653_2_0_6"/>
<dbReference type="InParanoid" id="Q3J6Z7"/>
<dbReference type="Proteomes" id="UP000006838">
    <property type="component" value="Chromosome"/>
</dbReference>
<dbReference type="GO" id="GO:0005886">
    <property type="term" value="C:plasma membrane"/>
    <property type="evidence" value="ECO:0007669"/>
    <property type="project" value="UniProtKB-SubCell"/>
</dbReference>
<dbReference type="HAMAP" id="MF_00010">
    <property type="entry name" value="UPF0060"/>
    <property type="match status" value="1"/>
</dbReference>
<dbReference type="InterPro" id="IPR003844">
    <property type="entry name" value="UPF0060"/>
</dbReference>
<dbReference type="NCBIfam" id="NF002586">
    <property type="entry name" value="PRK02237.1"/>
    <property type="match status" value="1"/>
</dbReference>
<dbReference type="PANTHER" id="PTHR36116">
    <property type="entry name" value="UPF0060 MEMBRANE PROTEIN YNFA"/>
    <property type="match status" value="1"/>
</dbReference>
<dbReference type="PANTHER" id="PTHR36116:SF1">
    <property type="entry name" value="UPF0060 MEMBRANE PROTEIN YNFA"/>
    <property type="match status" value="1"/>
</dbReference>
<dbReference type="Pfam" id="PF02694">
    <property type="entry name" value="UPF0060"/>
    <property type="match status" value="1"/>
</dbReference>
<dbReference type="SUPFAM" id="SSF103481">
    <property type="entry name" value="Multidrug resistance efflux transporter EmrE"/>
    <property type="match status" value="1"/>
</dbReference>
<evidence type="ECO:0000255" key="1">
    <source>
        <dbReference type="HAMAP-Rule" id="MF_00010"/>
    </source>
</evidence>
<sequence>MPELKTVGLFLITALAEIAGCYLAYLWLREDKTIWLLVPCALSLVAFVWLLSLHPTAAGRVYAAYGGVYIVMAILWLWVVNGIRPTTWDLVGSAIALLGMAIIMFAPRTT</sequence>